<comment type="function">
    <text evidence="1">Associates with the EF-Tu.GDP complex and induces the exchange of GDP to GTP. It remains bound to the aminoacyl-tRNA.EF-Tu.GTP complex up to the GTP hydrolysis stage on the ribosome.</text>
</comment>
<comment type="subcellular location">
    <subcellularLocation>
        <location evidence="1">Cytoplasm</location>
    </subcellularLocation>
</comment>
<comment type="similarity">
    <text evidence="1">Belongs to the EF-Ts family.</text>
</comment>
<evidence type="ECO:0000255" key="1">
    <source>
        <dbReference type="HAMAP-Rule" id="MF_00050"/>
    </source>
</evidence>
<sequence length="294" mass="32357">MAVTASMVKELREKTGAGMMDCKKALVEVDGDMEKAIDYLREKGIAKAEKKADRVAAEGLASVVTEGNKAVILEVNSETDFVAKNENFQALVTELAEHILAEEPADVEAALAQPFKGGSETVQDHINTAIAKIGEKLSLRRFTVVEKEDADVFGSYLHMGGRIGVLTVIGSSSDQELAKDIAMHVAAINPTYVSRDEVTKDVVDRERDVLKQQALNEGKPENIVEKMVEGRLSKFFEQVCLLDQPFVKDGDQKVGKYVKSKQASVKSFVRYEVGEGIEKREDNFAEEVMSQVKK</sequence>
<accession>Q5WFS9</accession>
<organism>
    <name type="scientific">Shouchella clausii (strain KSM-K16)</name>
    <name type="common">Alkalihalobacillus clausii</name>
    <dbReference type="NCBI Taxonomy" id="66692"/>
    <lineage>
        <taxon>Bacteria</taxon>
        <taxon>Bacillati</taxon>
        <taxon>Bacillota</taxon>
        <taxon>Bacilli</taxon>
        <taxon>Bacillales</taxon>
        <taxon>Bacillaceae</taxon>
        <taxon>Shouchella</taxon>
    </lineage>
</organism>
<reference key="1">
    <citation type="submission" date="2003-10" db="EMBL/GenBank/DDBJ databases">
        <title>The complete genome sequence of the alkaliphilic Bacillus clausii KSM-K16.</title>
        <authorList>
            <person name="Takaki Y."/>
            <person name="Kageyama Y."/>
            <person name="Shimamura S."/>
            <person name="Suzuki H."/>
            <person name="Nishi S."/>
            <person name="Hatada Y."/>
            <person name="Kawai S."/>
            <person name="Ito S."/>
            <person name="Horikoshi K."/>
        </authorList>
    </citation>
    <scope>NUCLEOTIDE SEQUENCE [LARGE SCALE GENOMIC DNA]</scope>
    <source>
        <strain>KSM-K16</strain>
    </source>
</reference>
<name>EFTS_SHOC1</name>
<gene>
    <name evidence="1" type="primary">tsf</name>
    <name type="ordered locus">ABC2241</name>
</gene>
<keyword id="KW-0963">Cytoplasm</keyword>
<keyword id="KW-0251">Elongation factor</keyword>
<keyword id="KW-0648">Protein biosynthesis</keyword>
<keyword id="KW-1185">Reference proteome</keyword>
<proteinExistence type="inferred from homology"/>
<dbReference type="EMBL" id="AP006627">
    <property type="protein sequence ID" value="BAD64776.1"/>
    <property type="molecule type" value="Genomic_DNA"/>
</dbReference>
<dbReference type="RefSeq" id="WP_011247084.1">
    <property type="nucleotide sequence ID" value="NC_006582.1"/>
</dbReference>
<dbReference type="SMR" id="Q5WFS9"/>
<dbReference type="STRING" id="66692.ABC2241"/>
<dbReference type="KEGG" id="bcl:ABC2241"/>
<dbReference type="eggNOG" id="COG0264">
    <property type="taxonomic scope" value="Bacteria"/>
</dbReference>
<dbReference type="HOGENOM" id="CLU_047155_0_2_9"/>
<dbReference type="OrthoDB" id="9808348at2"/>
<dbReference type="Proteomes" id="UP000001168">
    <property type="component" value="Chromosome"/>
</dbReference>
<dbReference type="GO" id="GO:0005737">
    <property type="term" value="C:cytoplasm"/>
    <property type="evidence" value="ECO:0007669"/>
    <property type="project" value="UniProtKB-SubCell"/>
</dbReference>
<dbReference type="GO" id="GO:0003746">
    <property type="term" value="F:translation elongation factor activity"/>
    <property type="evidence" value="ECO:0007669"/>
    <property type="project" value="UniProtKB-UniRule"/>
</dbReference>
<dbReference type="CDD" id="cd14275">
    <property type="entry name" value="UBA_EF-Ts"/>
    <property type="match status" value="1"/>
</dbReference>
<dbReference type="FunFam" id="1.10.286.20:FF:000003">
    <property type="entry name" value="Elongation factor Ts"/>
    <property type="match status" value="1"/>
</dbReference>
<dbReference type="FunFam" id="1.10.8.10:FF:000001">
    <property type="entry name" value="Elongation factor Ts"/>
    <property type="match status" value="1"/>
</dbReference>
<dbReference type="Gene3D" id="1.10.286.20">
    <property type="match status" value="1"/>
</dbReference>
<dbReference type="Gene3D" id="1.10.8.10">
    <property type="entry name" value="DNA helicase RuvA subunit, C-terminal domain"/>
    <property type="match status" value="1"/>
</dbReference>
<dbReference type="Gene3D" id="3.30.479.20">
    <property type="entry name" value="Elongation factor Ts, dimerisation domain"/>
    <property type="match status" value="2"/>
</dbReference>
<dbReference type="HAMAP" id="MF_00050">
    <property type="entry name" value="EF_Ts"/>
    <property type="match status" value="1"/>
</dbReference>
<dbReference type="InterPro" id="IPR036402">
    <property type="entry name" value="EF-Ts_dimer_sf"/>
</dbReference>
<dbReference type="InterPro" id="IPR001816">
    <property type="entry name" value="Transl_elong_EFTs/EF1B"/>
</dbReference>
<dbReference type="InterPro" id="IPR014039">
    <property type="entry name" value="Transl_elong_EFTs/EF1B_dimer"/>
</dbReference>
<dbReference type="InterPro" id="IPR018101">
    <property type="entry name" value="Transl_elong_Ts_CS"/>
</dbReference>
<dbReference type="InterPro" id="IPR009060">
    <property type="entry name" value="UBA-like_sf"/>
</dbReference>
<dbReference type="NCBIfam" id="TIGR00116">
    <property type="entry name" value="tsf"/>
    <property type="match status" value="1"/>
</dbReference>
<dbReference type="PANTHER" id="PTHR11741">
    <property type="entry name" value="ELONGATION FACTOR TS"/>
    <property type="match status" value="1"/>
</dbReference>
<dbReference type="PANTHER" id="PTHR11741:SF0">
    <property type="entry name" value="ELONGATION FACTOR TS, MITOCHONDRIAL"/>
    <property type="match status" value="1"/>
</dbReference>
<dbReference type="Pfam" id="PF00889">
    <property type="entry name" value="EF_TS"/>
    <property type="match status" value="1"/>
</dbReference>
<dbReference type="SUPFAM" id="SSF54713">
    <property type="entry name" value="Elongation factor Ts (EF-Ts), dimerisation domain"/>
    <property type="match status" value="2"/>
</dbReference>
<dbReference type="SUPFAM" id="SSF46934">
    <property type="entry name" value="UBA-like"/>
    <property type="match status" value="1"/>
</dbReference>
<dbReference type="PROSITE" id="PS01126">
    <property type="entry name" value="EF_TS_1"/>
    <property type="match status" value="1"/>
</dbReference>
<dbReference type="PROSITE" id="PS01127">
    <property type="entry name" value="EF_TS_2"/>
    <property type="match status" value="1"/>
</dbReference>
<protein>
    <recommendedName>
        <fullName evidence="1">Elongation factor Ts</fullName>
        <shortName evidence="1">EF-Ts</shortName>
    </recommendedName>
</protein>
<feature type="chain" id="PRO_0000161076" description="Elongation factor Ts">
    <location>
        <begin position="1"/>
        <end position="294"/>
    </location>
</feature>
<feature type="region of interest" description="Involved in Mg(2+) ion dislocation from EF-Tu" evidence="1">
    <location>
        <begin position="79"/>
        <end position="82"/>
    </location>
</feature>